<protein>
    <recommendedName>
        <fullName evidence="1">DNA mismatch repair protein MutL</fullName>
    </recommendedName>
</protein>
<gene>
    <name evidence="1" type="primary">mutL</name>
    <name type="ordered locus">CA_C1836</name>
</gene>
<reference key="1">
    <citation type="journal article" date="2001" name="J. Bacteriol.">
        <title>Genome sequence and comparative analysis of the solvent-producing bacterium Clostridium acetobutylicum.</title>
        <authorList>
            <person name="Noelling J."/>
            <person name="Breton G."/>
            <person name="Omelchenko M.V."/>
            <person name="Makarova K.S."/>
            <person name="Zeng Q."/>
            <person name="Gibson R."/>
            <person name="Lee H.M."/>
            <person name="Dubois J."/>
            <person name="Qiu D."/>
            <person name="Hitti J."/>
            <person name="Wolf Y.I."/>
            <person name="Tatusov R.L."/>
            <person name="Sabathe F."/>
            <person name="Doucette-Stamm L.A."/>
            <person name="Soucaille P."/>
            <person name="Daly M.J."/>
            <person name="Bennett G.N."/>
            <person name="Koonin E.V."/>
            <person name="Smith D.R."/>
        </authorList>
    </citation>
    <scope>NUCLEOTIDE SEQUENCE [LARGE SCALE GENOMIC DNA]</scope>
    <source>
        <strain>ATCC 824 / DSM 792 / JCM 1419 / IAM 19013 / LMG 5710 / NBRC 13948 / NRRL B-527 / VKM B-1787 / 2291 / W</strain>
    </source>
</reference>
<sequence length="622" mass="71065">MRINILSEDTSNKIAAGEVVERPFSVVKELVENSIDAGAKTINIEIENGGRTLIKVLDDGYGIDKDDIEKAFMPHATSKISKLQDIYSINTLGFRGEALPSIASVSKTTLKSRTKENEFGREISISGGSVDYIKDCGTNIGTHIEVRDLFYNVPAREKFLKSTAKEASSISDIVNRLALAHSEISFRLINNGKRVITTYATDNLIDTIRAIYGKKICDNVISFERHTDLVSVHGYVGNAEISRGSRNNQSIFINKRYIKNKLITAAVENAVKSFMMINKFPFFIIFLDIFPEFVDVNVHPTKSEVKFQNERDIFKIIFDTVHEGIRNSLKESFKVEALKEEEDKLFDIKEDVITKNEIKHDDKIDGYIKKDSFPVPVQIPIDLKRPIENYDNSTKENKDRSFDDFREKDIIKETSQEKETYDIITNKKAKFPELRVIGQFNNTYILAESFEELYIIDQHAAHEKILFEKYREDIKNKGVSSQILITPSVVELLPEDFIYYDENKEVFKNAGFVIEYFGDNTVAIKEVPLFLGKPLVKDLFLEIIDNLKNMGSGETSEVKYRSIATAACKSAVKAYHELTHDEMKTLIQDLRFAEDPFNCPHGRPTIVRLTVTDFEKKFKRIQ</sequence>
<keyword id="KW-0227">DNA damage</keyword>
<keyword id="KW-0234">DNA repair</keyword>
<keyword id="KW-1185">Reference proteome</keyword>
<organism>
    <name type="scientific">Clostridium acetobutylicum (strain ATCC 824 / DSM 792 / JCM 1419 / IAM 19013 / LMG 5710 / NBRC 13948 / NRRL B-527 / VKM B-1787 / 2291 / W)</name>
    <dbReference type="NCBI Taxonomy" id="272562"/>
    <lineage>
        <taxon>Bacteria</taxon>
        <taxon>Bacillati</taxon>
        <taxon>Bacillota</taxon>
        <taxon>Clostridia</taxon>
        <taxon>Eubacteriales</taxon>
        <taxon>Clostridiaceae</taxon>
        <taxon>Clostridium</taxon>
    </lineage>
</organism>
<evidence type="ECO:0000255" key="1">
    <source>
        <dbReference type="HAMAP-Rule" id="MF_00149"/>
    </source>
</evidence>
<dbReference type="EMBL" id="AE001437">
    <property type="protein sequence ID" value="AAK79800.1"/>
    <property type="molecule type" value="Genomic_DNA"/>
</dbReference>
<dbReference type="PIR" id="E97126">
    <property type="entry name" value="E97126"/>
</dbReference>
<dbReference type="RefSeq" id="NP_348460.1">
    <property type="nucleotide sequence ID" value="NC_003030.1"/>
</dbReference>
<dbReference type="RefSeq" id="WP_010965141.1">
    <property type="nucleotide sequence ID" value="NC_003030.1"/>
</dbReference>
<dbReference type="SMR" id="Q97I20"/>
<dbReference type="STRING" id="272562.CA_C1836"/>
<dbReference type="GeneID" id="44998329"/>
<dbReference type="KEGG" id="cac:CA_C1836"/>
<dbReference type="PATRIC" id="fig|272562.8.peg.2041"/>
<dbReference type="eggNOG" id="COG0323">
    <property type="taxonomic scope" value="Bacteria"/>
</dbReference>
<dbReference type="HOGENOM" id="CLU_004131_4_1_9"/>
<dbReference type="OrthoDB" id="9763467at2"/>
<dbReference type="Proteomes" id="UP000000814">
    <property type="component" value="Chromosome"/>
</dbReference>
<dbReference type="GO" id="GO:0032300">
    <property type="term" value="C:mismatch repair complex"/>
    <property type="evidence" value="ECO:0007669"/>
    <property type="project" value="InterPro"/>
</dbReference>
<dbReference type="GO" id="GO:0005524">
    <property type="term" value="F:ATP binding"/>
    <property type="evidence" value="ECO:0007669"/>
    <property type="project" value="InterPro"/>
</dbReference>
<dbReference type="GO" id="GO:0016887">
    <property type="term" value="F:ATP hydrolysis activity"/>
    <property type="evidence" value="ECO:0007669"/>
    <property type="project" value="InterPro"/>
</dbReference>
<dbReference type="GO" id="GO:0140664">
    <property type="term" value="F:ATP-dependent DNA damage sensor activity"/>
    <property type="evidence" value="ECO:0007669"/>
    <property type="project" value="InterPro"/>
</dbReference>
<dbReference type="GO" id="GO:0030983">
    <property type="term" value="F:mismatched DNA binding"/>
    <property type="evidence" value="ECO:0007669"/>
    <property type="project" value="InterPro"/>
</dbReference>
<dbReference type="GO" id="GO:0006298">
    <property type="term" value="P:mismatch repair"/>
    <property type="evidence" value="ECO:0007669"/>
    <property type="project" value="UniProtKB-UniRule"/>
</dbReference>
<dbReference type="CDD" id="cd16926">
    <property type="entry name" value="HATPase_MutL-MLH-PMS-like"/>
    <property type="match status" value="1"/>
</dbReference>
<dbReference type="CDD" id="cd00782">
    <property type="entry name" value="MutL_Trans"/>
    <property type="match status" value="1"/>
</dbReference>
<dbReference type="FunFam" id="3.30.565.10:FF:000003">
    <property type="entry name" value="DNA mismatch repair endonuclease MutL"/>
    <property type="match status" value="1"/>
</dbReference>
<dbReference type="Gene3D" id="3.30.230.10">
    <property type="match status" value="1"/>
</dbReference>
<dbReference type="Gene3D" id="3.30.565.10">
    <property type="entry name" value="Histidine kinase-like ATPase, C-terminal domain"/>
    <property type="match status" value="1"/>
</dbReference>
<dbReference type="Gene3D" id="3.30.1540.20">
    <property type="entry name" value="MutL, C-terminal domain, dimerisation subdomain"/>
    <property type="match status" value="1"/>
</dbReference>
<dbReference type="Gene3D" id="3.30.1370.100">
    <property type="entry name" value="MutL, C-terminal domain, regulatory subdomain"/>
    <property type="match status" value="1"/>
</dbReference>
<dbReference type="HAMAP" id="MF_00149">
    <property type="entry name" value="DNA_mis_repair"/>
    <property type="match status" value="1"/>
</dbReference>
<dbReference type="InterPro" id="IPR014762">
    <property type="entry name" value="DNA_mismatch_repair_CS"/>
</dbReference>
<dbReference type="InterPro" id="IPR020667">
    <property type="entry name" value="DNA_mismatch_repair_MutL"/>
</dbReference>
<dbReference type="InterPro" id="IPR013507">
    <property type="entry name" value="DNA_mismatch_S5_2-like"/>
</dbReference>
<dbReference type="InterPro" id="IPR036890">
    <property type="entry name" value="HATPase_C_sf"/>
</dbReference>
<dbReference type="InterPro" id="IPR002099">
    <property type="entry name" value="MutL/Mlh/PMS"/>
</dbReference>
<dbReference type="InterPro" id="IPR038973">
    <property type="entry name" value="MutL/Mlh/Pms-like"/>
</dbReference>
<dbReference type="InterPro" id="IPR014790">
    <property type="entry name" value="MutL_C"/>
</dbReference>
<dbReference type="InterPro" id="IPR042120">
    <property type="entry name" value="MutL_C_dimsub"/>
</dbReference>
<dbReference type="InterPro" id="IPR042121">
    <property type="entry name" value="MutL_C_regsub"/>
</dbReference>
<dbReference type="InterPro" id="IPR037198">
    <property type="entry name" value="MutL_C_sf"/>
</dbReference>
<dbReference type="InterPro" id="IPR020568">
    <property type="entry name" value="Ribosomal_Su5_D2-typ_SF"/>
</dbReference>
<dbReference type="InterPro" id="IPR014721">
    <property type="entry name" value="Ribsml_uS5_D2-typ_fold_subgr"/>
</dbReference>
<dbReference type="NCBIfam" id="TIGR00585">
    <property type="entry name" value="mutl"/>
    <property type="match status" value="1"/>
</dbReference>
<dbReference type="PANTHER" id="PTHR10073">
    <property type="entry name" value="DNA MISMATCH REPAIR PROTEIN MLH, PMS, MUTL"/>
    <property type="match status" value="1"/>
</dbReference>
<dbReference type="PANTHER" id="PTHR10073:SF12">
    <property type="entry name" value="DNA MISMATCH REPAIR PROTEIN MLH1"/>
    <property type="match status" value="1"/>
</dbReference>
<dbReference type="Pfam" id="PF01119">
    <property type="entry name" value="DNA_mis_repair"/>
    <property type="match status" value="1"/>
</dbReference>
<dbReference type="Pfam" id="PF13589">
    <property type="entry name" value="HATPase_c_3"/>
    <property type="match status" value="1"/>
</dbReference>
<dbReference type="Pfam" id="PF08676">
    <property type="entry name" value="MutL_C"/>
    <property type="match status" value="1"/>
</dbReference>
<dbReference type="SMART" id="SM01340">
    <property type="entry name" value="DNA_mis_repair"/>
    <property type="match status" value="1"/>
</dbReference>
<dbReference type="SMART" id="SM00853">
    <property type="entry name" value="MutL_C"/>
    <property type="match status" value="1"/>
</dbReference>
<dbReference type="SUPFAM" id="SSF55874">
    <property type="entry name" value="ATPase domain of HSP90 chaperone/DNA topoisomerase II/histidine kinase"/>
    <property type="match status" value="1"/>
</dbReference>
<dbReference type="SUPFAM" id="SSF118116">
    <property type="entry name" value="DNA mismatch repair protein MutL"/>
    <property type="match status" value="1"/>
</dbReference>
<dbReference type="SUPFAM" id="SSF54211">
    <property type="entry name" value="Ribosomal protein S5 domain 2-like"/>
    <property type="match status" value="1"/>
</dbReference>
<dbReference type="PROSITE" id="PS00058">
    <property type="entry name" value="DNA_MISMATCH_REPAIR_1"/>
    <property type="match status" value="1"/>
</dbReference>
<accession>Q97I20</accession>
<name>MUTL_CLOAB</name>
<comment type="function">
    <text evidence="1">This protein is involved in the repair of mismatches in DNA. It is required for dam-dependent methyl-directed DNA mismatch repair. May act as a 'molecular matchmaker', a protein that promotes the formation of a stable complex between two or more DNA-binding proteins in an ATP-dependent manner without itself being part of a final effector complex.</text>
</comment>
<comment type="similarity">
    <text evidence="1">Belongs to the DNA mismatch repair MutL/HexB family.</text>
</comment>
<feature type="chain" id="PRO_0000177940" description="DNA mismatch repair protein MutL">
    <location>
        <begin position="1"/>
        <end position="622"/>
    </location>
</feature>
<proteinExistence type="inferred from homology"/>